<organism>
    <name type="scientific">Janthinobacterium sp. (strain Marseille)</name>
    <name type="common">Minibacterium massiliensis</name>
    <dbReference type="NCBI Taxonomy" id="375286"/>
    <lineage>
        <taxon>Bacteria</taxon>
        <taxon>Pseudomonadati</taxon>
        <taxon>Pseudomonadota</taxon>
        <taxon>Betaproteobacteria</taxon>
        <taxon>Burkholderiales</taxon>
        <taxon>Oxalobacteraceae</taxon>
        <taxon>Janthinobacterium</taxon>
    </lineage>
</organism>
<feature type="chain" id="PRO_1000017500" description="Large ribosomal subunit protein bL27">
    <location>
        <begin position="1"/>
        <end position="85"/>
    </location>
</feature>
<feature type="region of interest" description="Disordered" evidence="2">
    <location>
        <begin position="1"/>
        <end position="21"/>
    </location>
</feature>
<gene>
    <name evidence="1" type="primary">rpmA</name>
    <name type="ordered locus">mma_2993</name>
</gene>
<protein>
    <recommendedName>
        <fullName evidence="1">Large ribosomal subunit protein bL27</fullName>
    </recommendedName>
    <alternativeName>
        <fullName evidence="3">50S ribosomal protein L27</fullName>
    </alternativeName>
</protein>
<proteinExistence type="inferred from homology"/>
<dbReference type="EMBL" id="CP000269">
    <property type="protein sequence ID" value="ABR91654.1"/>
    <property type="molecule type" value="Genomic_DNA"/>
</dbReference>
<dbReference type="RefSeq" id="WP_012080842.1">
    <property type="nucleotide sequence ID" value="NC_009659.1"/>
</dbReference>
<dbReference type="SMR" id="A6T2D6"/>
<dbReference type="STRING" id="375286.mma_2993"/>
<dbReference type="KEGG" id="mms:mma_2993"/>
<dbReference type="eggNOG" id="COG0211">
    <property type="taxonomic scope" value="Bacteria"/>
</dbReference>
<dbReference type="HOGENOM" id="CLU_095424_4_1_4"/>
<dbReference type="OrthoDB" id="9803474at2"/>
<dbReference type="Proteomes" id="UP000006388">
    <property type="component" value="Chromosome"/>
</dbReference>
<dbReference type="GO" id="GO:0022625">
    <property type="term" value="C:cytosolic large ribosomal subunit"/>
    <property type="evidence" value="ECO:0007669"/>
    <property type="project" value="TreeGrafter"/>
</dbReference>
<dbReference type="GO" id="GO:0003735">
    <property type="term" value="F:structural constituent of ribosome"/>
    <property type="evidence" value="ECO:0007669"/>
    <property type="project" value="InterPro"/>
</dbReference>
<dbReference type="GO" id="GO:0006412">
    <property type="term" value="P:translation"/>
    <property type="evidence" value="ECO:0007669"/>
    <property type="project" value="UniProtKB-UniRule"/>
</dbReference>
<dbReference type="FunFam" id="2.40.50.100:FF:000020">
    <property type="entry name" value="50S ribosomal protein L27"/>
    <property type="match status" value="1"/>
</dbReference>
<dbReference type="Gene3D" id="2.40.50.100">
    <property type="match status" value="1"/>
</dbReference>
<dbReference type="HAMAP" id="MF_00539">
    <property type="entry name" value="Ribosomal_bL27"/>
    <property type="match status" value="1"/>
</dbReference>
<dbReference type="InterPro" id="IPR001684">
    <property type="entry name" value="Ribosomal_bL27"/>
</dbReference>
<dbReference type="InterPro" id="IPR018261">
    <property type="entry name" value="Ribosomal_bL27_CS"/>
</dbReference>
<dbReference type="NCBIfam" id="TIGR00062">
    <property type="entry name" value="L27"/>
    <property type="match status" value="1"/>
</dbReference>
<dbReference type="PANTHER" id="PTHR15893:SF0">
    <property type="entry name" value="LARGE RIBOSOMAL SUBUNIT PROTEIN BL27M"/>
    <property type="match status" value="1"/>
</dbReference>
<dbReference type="PANTHER" id="PTHR15893">
    <property type="entry name" value="RIBOSOMAL PROTEIN L27"/>
    <property type="match status" value="1"/>
</dbReference>
<dbReference type="Pfam" id="PF01016">
    <property type="entry name" value="Ribosomal_L27"/>
    <property type="match status" value="1"/>
</dbReference>
<dbReference type="PRINTS" id="PR00063">
    <property type="entry name" value="RIBOSOMALL27"/>
</dbReference>
<dbReference type="SUPFAM" id="SSF110324">
    <property type="entry name" value="Ribosomal L27 protein-like"/>
    <property type="match status" value="1"/>
</dbReference>
<dbReference type="PROSITE" id="PS00831">
    <property type="entry name" value="RIBOSOMAL_L27"/>
    <property type="match status" value="1"/>
</dbReference>
<comment type="similarity">
    <text evidence="1">Belongs to the bacterial ribosomal protein bL27 family.</text>
</comment>
<accession>A6T2D6</accession>
<sequence length="85" mass="8969">MAHKKGGGTTRNGRDSESKRLGVKVYGGQAINAGGIIVRQRGTKMHPGENVGIGKDHTLFALTDGKVAFVTKGALQRHYVTVVPA</sequence>
<reference key="1">
    <citation type="journal article" date="2007" name="PLoS Genet.">
        <title>Genome analysis of Minibacterium massiliensis highlights the convergent evolution of water-living bacteria.</title>
        <authorList>
            <person name="Audic S."/>
            <person name="Robert C."/>
            <person name="Campagna B."/>
            <person name="Parinello H."/>
            <person name="Claverie J.-M."/>
            <person name="Raoult D."/>
            <person name="Drancourt M."/>
        </authorList>
    </citation>
    <scope>NUCLEOTIDE SEQUENCE [LARGE SCALE GENOMIC DNA]</scope>
    <source>
        <strain>Marseille</strain>
    </source>
</reference>
<evidence type="ECO:0000255" key="1">
    <source>
        <dbReference type="HAMAP-Rule" id="MF_00539"/>
    </source>
</evidence>
<evidence type="ECO:0000256" key="2">
    <source>
        <dbReference type="SAM" id="MobiDB-lite"/>
    </source>
</evidence>
<evidence type="ECO:0000305" key="3"/>
<keyword id="KW-0687">Ribonucleoprotein</keyword>
<keyword id="KW-0689">Ribosomal protein</keyword>
<name>RL27_JANMA</name>